<comment type="function">
    <text evidence="1">Catalyzes the attachment of alanine to tRNA(Ala) in a two-step reaction: alanine is first activated by ATP to form Ala-AMP and then transferred to the acceptor end of tRNA(Ala). Also edits incorrectly charged Ser-tRNA(Ala) and Gly-tRNA(Ala) via its editing domain.</text>
</comment>
<comment type="catalytic activity">
    <reaction evidence="1">
        <text>tRNA(Ala) + L-alanine + ATP = L-alanyl-tRNA(Ala) + AMP + diphosphate</text>
        <dbReference type="Rhea" id="RHEA:12540"/>
        <dbReference type="Rhea" id="RHEA-COMP:9657"/>
        <dbReference type="Rhea" id="RHEA-COMP:9923"/>
        <dbReference type="ChEBI" id="CHEBI:30616"/>
        <dbReference type="ChEBI" id="CHEBI:33019"/>
        <dbReference type="ChEBI" id="CHEBI:57972"/>
        <dbReference type="ChEBI" id="CHEBI:78442"/>
        <dbReference type="ChEBI" id="CHEBI:78497"/>
        <dbReference type="ChEBI" id="CHEBI:456215"/>
        <dbReference type="EC" id="6.1.1.7"/>
    </reaction>
</comment>
<comment type="cofactor">
    <cofactor evidence="1">
        <name>Zn(2+)</name>
        <dbReference type="ChEBI" id="CHEBI:29105"/>
    </cofactor>
    <text evidence="1">Binds 1 zinc ion per subunit.</text>
</comment>
<comment type="subcellular location">
    <subcellularLocation>
        <location evidence="1">Cytoplasm</location>
    </subcellularLocation>
</comment>
<comment type="domain">
    <text evidence="1">Consists of three domains; the N-terminal catalytic domain, the editing domain and the C-terminal C-Ala domain. The editing domain removes incorrectly charged amino acids, while the C-Ala domain, along with tRNA(Ala), serves as a bridge to cooperatively bring together the editing and aminoacylation centers thus stimulating deacylation of misacylated tRNAs.</text>
</comment>
<comment type="similarity">
    <text evidence="1">Belongs to the class-II aminoacyl-tRNA synthetase family.</text>
</comment>
<accession>Q2FQD6</accession>
<reference key="1">
    <citation type="journal article" date="2016" name="Stand. Genomic Sci.">
        <title>Complete genome sequence of Methanospirillum hungatei type strain JF1.</title>
        <authorList>
            <person name="Gunsalus R.P."/>
            <person name="Cook L.E."/>
            <person name="Crable B."/>
            <person name="Rohlin L."/>
            <person name="McDonald E."/>
            <person name="Mouttaki H."/>
            <person name="Sieber J.R."/>
            <person name="Poweleit N."/>
            <person name="Zhou H."/>
            <person name="Lapidus A.L."/>
            <person name="Daligault H.E."/>
            <person name="Land M."/>
            <person name="Gilna P."/>
            <person name="Ivanova N."/>
            <person name="Kyrpides N."/>
            <person name="Culley D.E."/>
            <person name="McInerney M.J."/>
        </authorList>
    </citation>
    <scope>NUCLEOTIDE SEQUENCE [LARGE SCALE GENOMIC DNA]</scope>
    <source>
        <strain>ATCC 27890 / DSM 864 / NBRC 100397 / JF-1</strain>
    </source>
</reference>
<sequence length="916" mass="102024">MMEDEYQLEYFKSEGLTRNICSSCGKAFWTRNPDRMVCGDAPCEPYQFIGNPIFRAKTVDEMREAYLSFFEKQGHTRIDRYPVAARWRDDIYLTIASIADFQPFVTSGVVPPPANPLTISQPCIRLNDLDSVGRSGRHLTCFEMMAHHAFNSDEKEIYWKDRTVELCDQLLTSLGANKEMVTYKEHPWIGGGNAGPSVEVLIGGLEVATLVFMSLGKQKTEKPPIELEGTPYYPMTLRIVDTGYGLERFVWASQGSPTIYDAVFPEMVSHVMQEAGFGHRLHDSDFIHILGENAKFAGLMDISGQRIFELRQKVAEKIGIPTDKLEKMIAPVESVYAIVDHTRCLSYMLGDCIVPSNAKDGYLARLVLRRTLRMMRELDLPDEKLGDLIERQMKIIGLSKFEQDPDVVMEIVDREVDKYRTTMERGARTVERLAQTYKKKCEKIPLDEIITLYDSHGIPPDMVKDLATSQGAVVDLPDDFYSRIANMHSESEQIQEKNPLFDYLDRLAHLPETRKLFYERPGSMEFEAKVLEIFDGQYVVLDQTLFYPEGGGQPGDTGLFLTPDGLTVRVCDTIKLGESILHRIDGGNVRKGDMIRGILDEDRRLSLMRHHTATHILLHAAKEVLGAHIHQAGAQKGEYSSRIDIRHYKHITPEELKKIEVVANRLVMANSSTSIAWEDRTDAEQKYGFCLYQGGVPPGSRIRVVKVAGDIEACAGTHCAHTGDIGTISIIRVEHVQDGVERLEFAAGIAAIQHKHHQEDLLNRSAEAFSVQVEALPATSKRFFDEWKEQRKEIEKLSSRISELESKNLETVDYNGISVLVKRLDLPNPELVKVATGISDKGGIAILVAGGETARVVVSSGQKGVKAGDVISTVCAVLGGKGGGKPTLAQGGGPDVSKIDDALAAGESFIKSALHV</sequence>
<name>SYA_METHJ</name>
<organism>
    <name type="scientific">Methanospirillum hungatei JF-1 (strain ATCC 27890 / DSM 864 / NBRC 100397 / JF-1)</name>
    <dbReference type="NCBI Taxonomy" id="323259"/>
    <lineage>
        <taxon>Archaea</taxon>
        <taxon>Methanobacteriati</taxon>
        <taxon>Methanobacteriota</taxon>
        <taxon>Stenosarchaea group</taxon>
        <taxon>Methanomicrobia</taxon>
        <taxon>Methanomicrobiales</taxon>
        <taxon>Methanospirillaceae</taxon>
        <taxon>Methanospirillum</taxon>
    </lineage>
</organism>
<evidence type="ECO:0000255" key="1">
    <source>
        <dbReference type="HAMAP-Rule" id="MF_00036"/>
    </source>
</evidence>
<proteinExistence type="inferred from homology"/>
<protein>
    <recommendedName>
        <fullName evidence="1">Alanine--tRNA ligase</fullName>
        <ecNumber evidence="1">6.1.1.7</ecNumber>
    </recommendedName>
    <alternativeName>
        <fullName evidence="1">Alanyl-tRNA synthetase</fullName>
        <shortName evidence="1">AlaRS</shortName>
    </alternativeName>
</protein>
<gene>
    <name evidence="1" type="primary">alaS</name>
    <name type="ordered locus">Mhun_0039</name>
</gene>
<dbReference type="EC" id="6.1.1.7" evidence="1"/>
<dbReference type="EMBL" id="CP000254">
    <property type="protein sequence ID" value="ABD39817.1"/>
    <property type="molecule type" value="Genomic_DNA"/>
</dbReference>
<dbReference type="RefSeq" id="WP_011447114.1">
    <property type="nucleotide sequence ID" value="NC_007796.1"/>
</dbReference>
<dbReference type="SMR" id="Q2FQD6"/>
<dbReference type="FunCoup" id="Q2FQD6">
    <property type="interactions" value="180"/>
</dbReference>
<dbReference type="STRING" id="323259.Mhun_0039"/>
<dbReference type="EnsemblBacteria" id="ABD39817">
    <property type="protein sequence ID" value="ABD39817"/>
    <property type="gene ID" value="Mhun_0039"/>
</dbReference>
<dbReference type="GeneID" id="3923668"/>
<dbReference type="KEGG" id="mhu:Mhun_0039"/>
<dbReference type="eggNOG" id="arCOG01255">
    <property type="taxonomic scope" value="Archaea"/>
</dbReference>
<dbReference type="HOGENOM" id="CLU_004485_4_0_2"/>
<dbReference type="InParanoid" id="Q2FQD6"/>
<dbReference type="OrthoDB" id="7506at2157"/>
<dbReference type="Proteomes" id="UP000001941">
    <property type="component" value="Chromosome"/>
</dbReference>
<dbReference type="GO" id="GO:0005737">
    <property type="term" value="C:cytoplasm"/>
    <property type="evidence" value="ECO:0007669"/>
    <property type="project" value="UniProtKB-SubCell"/>
</dbReference>
<dbReference type="GO" id="GO:0004813">
    <property type="term" value="F:alanine-tRNA ligase activity"/>
    <property type="evidence" value="ECO:0007669"/>
    <property type="project" value="UniProtKB-UniRule"/>
</dbReference>
<dbReference type="GO" id="GO:0002161">
    <property type="term" value="F:aminoacyl-tRNA deacylase activity"/>
    <property type="evidence" value="ECO:0007669"/>
    <property type="project" value="TreeGrafter"/>
</dbReference>
<dbReference type="GO" id="GO:0005524">
    <property type="term" value="F:ATP binding"/>
    <property type="evidence" value="ECO:0007669"/>
    <property type="project" value="UniProtKB-UniRule"/>
</dbReference>
<dbReference type="GO" id="GO:0000049">
    <property type="term" value="F:tRNA binding"/>
    <property type="evidence" value="ECO:0007669"/>
    <property type="project" value="UniProtKB-KW"/>
</dbReference>
<dbReference type="GO" id="GO:0008270">
    <property type="term" value="F:zinc ion binding"/>
    <property type="evidence" value="ECO:0007669"/>
    <property type="project" value="UniProtKB-UniRule"/>
</dbReference>
<dbReference type="GO" id="GO:0006419">
    <property type="term" value="P:alanyl-tRNA aminoacylation"/>
    <property type="evidence" value="ECO:0007669"/>
    <property type="project" value="UniProtKB-UniRule"/>
</dbReference>
<dbReference type="CDD" id="cd00673">
    <property type="entry name" value="AlaRS_core"/>
    <property type="match status" value="1"/>
</dbReference>
<dbReference type="FunFam" id="3.10.310.40:FF:000001">
    <property type="entry name" value="Alanine--tRNA ligase"/>
    <property type="match status" value="1"/>
</dbReference>
<dbReference type="FunFam" id="3.30.930.10:FF:000056">
    <property type="entry name" value="Alanine--tRNA ligase"/>
    <property type="match status" value="1"/>
</dbReference>
<dbReference type="Gene3D" id="2.40.30.130">
    <property type="match status" value="1"/>
</dbReference>
<dbReference type="Gene3D" id="3.10.310.40">
    <property type="match status" value="1"/>
</dbReference>
<dbReference type="Gene3D" id="3.30.54.20">
    <property type="match status" value="1"/>
</dbReference>
<dbReference type="Gene3D" id="6.10.250.550">
    <property type="match status" value="1"/>
</dbReference>
<dbReference type="Gene3D" id="3.30.930.10">
    <property type="entry name" value="Bira Bifunctional Protein, Domain 2"/>
    <property type="match status" value="1"/>
</dbReference>
<dbReference type="Gene3D" id="3.30.980.10">
    <property type="entry name" value="Threonyl-trna Synthetase, Chain A, domain 2"/>
    <property type="match status" value="1"/>
</dbReference>
<dbReference type="HAMAP" id="MF_00036_A">
    <property type="entry name" value="Ala_tRNA_synth_A"/>
    <property type="match status" value="1"/>
</dbReference>
<dbReference type="InterPro" id="IPR045864">
    <property type="entry name" value="aa-tRNA-synth_II/BPL/LPL"/>
</dbReference>
<dbReference type="InterPro" id="IPR002318">
    <property type="entry name" value="Ala-tRNA-lgiase_IIc"/>
</dbReference>
<dbReference type="InterPro" id="IPR018162">
    <property type="entry name" value="Ala-tRNA-ligase_IIc_anticod-bd"/>
</dbReference>
<dbReference type="InterPro" id="IPR018165">
    <property type="entry name" value="Ala-tRNA-synth_IIc_core"/>
</dbReference>
<dbReference type="InterPro" id="IPR018164">
    <property type="entry name" value="Ala-tRNA-synth_IIc_N"/>
</dbReference>
<dbReference type="InterPro" id="IPR022429">
    <property type="entry name" value="Ala-tRNA_lgiase_arc"/>
</dbReference>
<dbReference type="InterPro" id="IPR050058">
    <property type="entry name" value="Ala-tRNA_ligase"/>
</dbReference>
<dbReference type="InterPro" id="IPR003156">
    <property type="entry name" value="DHHA1_dom"/>
</dbReference>
<dbReference type="InterPro" id="IPR018163">
    <property type="entry name" value="Thr/Ala-tRNA-synth_IIc_edit"/>
</dbReference>
<dbReference type="InterPro" id="IPR009000">
    <property type="entry name" value="Transl_B-barrel_sf"/>
</dbReference>
<dbReference type="InterPro" id="IPR012947">
    <property type="entry name" value="tRNA_SAD"/>
</dbReference>
<dbReference type="NCBIfam" id="TIGR03683">
    <property type="entry name" value="A-tRNA_syn_arch"/>
    <property type="match status" value="1"/>
</dbReference>
<dbReference type="NCBIfam" id="TIGR00344">
    <property type="entry name" value="alaS"/>
    <property type="match status" value="1"/>
</dbReference>
<dbReference type="PANTHER" id="PTHR11777:SF9">
    <property type="entry name" value="ALANINE--TRNA LIGASE, CYTOPLASMIC"/>
    <property type="match status" value="1"/>
</dbReference>
<dbReference type="PANTHER" id="PTHR11777">
    <property type="entry name" value="ALANYL-TRNA SYNTHETASE"/>
    <property type="match status" value="1"/>
</dbReference>
<dbReference type="Pfam" id="PF02272">
    <property type="entry name" value="DHHA1"/>
    <property type="match status" value="1"/>
</dbReference>
<dbReference type="Pfam" id="PF01411">
    <property type="entry name" value="tRNA-synt_2c"/>
    <property type="match status" value="1"/>
</dbReference>
<dbReference type="Pfam" id="PF07973">
    <property type="entry name" value="tRNA_SAD"/>
    <property type="match status" value="1"/>
</dbReference>
<dbReference type="PRINTS" id="PR00980">
    <property type="entry name" value="TRNASYNTHALA"/>
</dbReference>
<dbReference type="SMART" id="SM00863">
    <property type="entry name" value="tRNA_SAD"/>
    <property type="match status" value="1"/>
</dbReference>
<dbReference type="SUPFAM" id="SSF55681">
    <property type="entry name" value="Class II aaRS and biotin synthetases"/>
    <property type="match status" value="1"/>
</dbReference>
<dbReference type="SUPFAM" id="SSF101353">
    <property type="entry name" value="Putative anticodon-binding domain of alanyl-tRNA synthetase (AlaRS)"/>
    <property type="match status" value="1"/>
</dbReference>
<dbReference type="SUPFAM" id="SSF55186">
    <property type="entry name" value="ThrRS/AlaRS common domain"/>
    <property type="match status" value="1"/>
</dbReference>
<dbReference type="SUPFAM" id="SSF50447">
    <property type="entry name" value="Translation proteins"/>
    <property type="match status" value="1"/>
</dbReference>
<dbReference type="PROSITE" id="PS50860">
    <property type="entry name" value="AA_TRNA_LIGASE_II_ALA"/>
    <property type="match status" value="1"/>
</dbReference>
<feature type="chain" id="PRO_1000074508" description="Alanine--tRNA ligase">
    <location>
        <begin position="1"/>
        <end position="916"/>
    </location>
</feature>
<feature type="binding site" evidence="1">
    <location>
        <position position="611"/>
    </location>
    <ligand>
        <name>Zn(2+)</name>
        <dbReference type="ChEBI" id="CHEBI:29105"/>
    </ligand>
</feature>
<feature type="binding site" evidence="1">
    <location>
        <position position="615"/>
    </location>
    <ligand>
        <name>Zn(2+)</name>
        <dbReference type="ChEBI" id="CHEBI:29105"/>
    </ligand>
</feature>
<feature type="binding site" evidence="1">
    <location>
        <position position="714"/>
    </location>
    <ligand>
        <name>Zn(2+)</name>
        <dbReference type="ChEBI" id="CHEBI:29105"/>
    </ligand>
</feature>
<feature type="binding site" evidence="1">
    <location>
        <position position="718"/>
    </location>
    <ligand>
        <name>Zn(2+)</name>
        <dbReference type="ChEBI" id="CHEBI:29105"/>
    </ligand>
</feature>
<keyword id="KW-0030">Aminoacyl-tRNA synthetase</keyword>
<keyword id="KW-0067">ATP-binding</keyword>
<keyword id="KW-0963">Cytoplasm</keyword>
<keyword id="KW-0436">Ligase</keyword>
<keyword id="KW-0479">Metal-binding</keyword>
<keyword id="KW-0547">Nucleotide-binding</keyword>
<keyword id="KW-0648">Protein biosynthesis</keyword>
<keyword id="KW-1185">Reference proteome</keyword>
<keyword id="KW-0694">RNA-binding</keyword>
<keyword id="KW-0820">tRNA-binding</keyword>
<keyword id="KW-0862">Zinc</keyword>